<name>PUR5_PYRAB</name>
<reference key="1">
    <citation type="journal article" date="2003" name="Mol. Microbiol.">
        <title>An integrated analysis of the genome of the hyperthermophilic archaeon Pyrococcus abyssi.</title>
        <authorList>
            <person name="Cohen G.N."/>
            <person name="Barbe V."/>
            <person name="Flament D."/>
            <person name="Galperin M."/>
            <person name="Heilig R."/>
            <person name="Lecompte O."/>
            <person name="Poch O."/>
            <person name="Prieur D."/>
            <person name="Querellou J."/>
            <person name="Ripp R."/>
            <person name="Thierry J.-C."/>
            <person name="Van der Oost J."/>
            <person name="Weissenbach J."/>
            <person name="Zivanovic Y."/>
            <person name="Forterre P."/>
        </authorList>
    </citation>
    <scope>NUCLEOTIDE SEQUENCE [LARGE SCALE GENOMIC DNA]</scope>
    <source>
        <strain>GE5 / Orsay</strain>
    </source>
</reference>
<reference key="2">
    <citation type="journal article" date="2012" name="Curr. Microbiol.">
        <title>Re-annotation of two hyperthermophilic archaea Pyrococcus abyssi GE5 and Pyrococcus furiosus DSM 3638.</title>
        <authorList>
            <person name="Gao J."/>
            <person name="Wang J."/>
        </authorList>
    </citation>
    <scope>GENOME REANNOTATION</scope>
    <source>
        <strain>GE5 / Orsay</strain>
    </source>
</reference>
<keyword id="KW-0067">ATP-binding</keyword>
<keyword id="KW-0963">Cytoplasm</keyword>
<keyword id="KW-0436">Ligase</keyword>
<keyword id="KW-0547">Nucleotide-binding</keyword>
<keyword id="KW-0658">Purine biosynthesis</keyword>
<evidence type="ECO:0000255" key="1">
    <source>
        <dbReference type="HAMAP-Rule" id="MF_00741"/>
    </source>
</evidence>
<organism>
    <name type="scientific">Pyrococcus abyssi (strain GE5 / Orsay)</name>
    <dbReference type="NCBI Taxonomy" id="272844"/>
    <lineage>
        <taxon>Archaea</taxon>
        <taxon>Methanobacteriati</taxon>
        <taxon>Methanobacteriota</taxon>
        <taxon>Thermococci</taxon>
        <taxon>Thermococcales</taxon>
        <taxon>Thermococcaceae</taxon>
        <taxon>Pyrococcus</taxon>
    </lineage>
</organism>
<gene>
    <name evidence="1" type="primary">purM</name>
    <name type="ordered locus">PYRAB16520</name>
    <name type="ORF">PAB1083</name>
</gene>
<dbReference type="EC" id="6.3.3.1" evidence="1"/>
<dbReference type="EMBL" id="AJ248288">
    <property type="protein sequence ID" value="CAB50556.1"/>
    <property type="molecule type" value="Genomic_DNA"/>
</dbReference>
<dbReference type="EMBL" id="HE613800">
    <property type="protein sequence ID" value="CCE71120.1"/>
    <property type="molecule type" value="Genomic_DNA"/>
</dbReference>
<dbReference type="PIR" id="F75014">
    <property type="entry name" value="F75014"/>
</dbReference>
<dbReference type="RefSeq" id="WP_010868770.1">
    <property type="nucleotide sequence ID" value="NC_000868.1"/>
</dbReference>
<dbReference type="SMR" id="Q9UY56"/>
<dbReference type="STRING" id="272844.PAB1083"/>
<dbReference type="KEGG" id="pab:PAB1083"/>
<dbReference type="PATRIC" id="fig|272844.11.peg.1766"/>
<dbReference type="eggNOG" id="arCOG00639">
    <property type="taxonomic scope" value="Archaea"/>
</dbReference>
<dbReference type="HOGENOM" id="CLU_047116_0_0_2"/>
<dbReference type="OrthoDB" id="6605at2157"/>
<dbReference type="PhylomeDB" id="Q9UY56"/>
<dbReference type="UniPathway" id="UPA00074">
    <property type="reaction ID" value="UER00129"/>
</dbReference>
<dbReference type="Proteomes" id="UP000000810">
    <property type="component" value="Chromosome"/>
</dbReference>
<dbReference type="Proteomes" id="UP000009139">
    <property type="component" value="Chromosome"/>
</dbReference>
<dbReference type="GO" id="GO:0005829">
    <property type="term" value="C:cytosol"/>
    <property type="evidence" value="ECO:0007669"/>
    <property type="project" value="TreeGrafter"/>
</dbReference>
<dbReference type="GO" id="GO:0005524">
    <property type="term" value="F:ATP binding"/>
    <property type="evidence" value="ECO:0007669"/>
    <property type="project" value="UniProtKB-KW"/>
</dbReference>
<dbReference type="GO" id="GO:0004637">
    <property type="term" value="F:phosphoribosylamine-glycine ligase activity"/>
    <property type="evidence" value="ECO:0007669"/>
    <property type="project" value="TreeGrafter"/>
</dbReference>
<dbReference type="GO" id="GO:0004641">
    <property type="term" value="F:phosphoribosylformylglycinamidine cyclo-ligase activity"/>
    <property type="evidence" value="ECO:0007669"/>
    <property type="project" value="UniProtKB-UniRule"/>
</dbReference>
<dbReference type="GO" id="GO:0006189">
    <property type="term" value="P:'de novo' IMP biosynthetic process"/>
    <property type="evidence" value="ECO:0007669"/>
    <property type="project" value="UniProtKB-UniRule"/>
</dbReference>
<dbReference type="GO" id="GO:0046084">
    <property type="term" value="P:adenine biosynthetic process"/>
    <property type="evidence" value="ECO:0007669"/>
    <property type="project" value="TreeGrafter"/>
</dbReference>
<dbReference type="CDD" id="cd02196">
    <property type="entry name" value="PurM"/>
    <property type="match status" value="1"/>
</dbReference>
<dbReference type="FunFam" id="3.30.1330.10:FF:000020">
    <property type="entry name" value="Phosphoribosylformylglycinamidine cyclo-ligase"/>
    <property type="match status" value="1"/>
</dbReference>
<dbReference type="FunFam" id="3.90.650.10:FF:000011">
    <property type="entry name" value="Phosphoribosylformylglycinamidine cyclo-ligase"/>
    <property type="match status" value="1"/>
</dbReference>
<dbReference type="Gene3D" id="3.90.650.10">
    <property type="entry name" value="PurM-like C-terminal domain"/>
    <property type="match status" value="1"/>
</dbReference>
<dbReference type="Gene3D" id="3.30.1330.10">
    <property type="entry name" value="PurM-like, N-terminal domain"/>
    <property type="match status" value="1"/>
</dbReference>
<dbReference type="HAMAP" id="MF_00741">
    <property type="entry name" value="AIRS"/>
    <property type="match status" value="1"/>
</dbReference>
<dbReference type="InterPro" id="IPR010918">
    <property type="entry name" value="PurM-like_C_dom"/>
</dbReference>
<dbReference type="InterPro" id="IPR036676">
    <property type="entry name" value="PurM-like_C_sf"/>
</dbReference>
<dbReference type="InterPro" id="IPR016188">
    <property type="entry name" value="PurM-like_N"/>
</dbReference>
<dbReference type="InterPro" id="IPR036921">
    <property type="entry name" value="PurM-like_N_sf"/>
</dbReference>
<dbReference type="InterPro" id="IPR004733">
    <property type="entry name" value="PurM_cligase"/>
</dbReference>
<dbReference type="NCBIfam" id="TIGR00878">
    <property type="entry name" value="purM"/>
    <property type="match status" value="1"/>
</dbReference>
<dbReference type="PANTHER" id="PTHR10520:SF12">
    <property type="entry name" value="TRIFUNCTIONAL PURINE BIOSYNTHETIC PROTEIN ADENOSINE-3"/>
    <property type="match status" value="1"/>
</dbReference>
<dbReference type="PANTHER" id="PTHR10520">
    <property type="entry name" value="TRIFUNCTIONAL PURINE BIOSYNTHETIC PROTEIN ADENOSINE-3-RELATED"/>
    <property type="match status" value="1"/>
</dbReference>
<dbReference type="Pfam" id="PF00586">
    <property type="entry name" value="AIRS"/>
    <property type="match status" value="1"/>
</dbReference>
<dbReference type="Pfam" id="PF02769">
    <property type="entry name" value="AIRS_C"/>
    <property type="match status" value="1"/>
</dbReference>
<dbReference type="SUPFAM" id="SSF56042">
    <property type="entry name" value="PurM C-terminal domain-like"/>
    <property type="match status" value="1"/>
</dbReference>
<dbReference type="SUPFAM" id="SSF55326">
    <property type="entry name" value="PurM N-terminal domain-like"/>
    <property type="match status" value="1"/>
</dbReference>
<proteinExistence type="inferred from homology"/>
<comment type="catalytic activity">
    <reaction evidence="1">
        <text>2-formamido-N(1)-(5-O-phospho-beta-D-ribosyl)acetamidine + ATP = 5-amino-1-(5-phospho-beta-D-ribosyl)imidazole + ADP + phosphate + H(+)</text>
        <dbReference type="Rhea" id="RHEA:23032"/>
        <dbReference type="ChEBI" id="CHEBI:15378"/>
        <dbReference type="ChEBI" id="CHEBI:30616"/>
        <dbReference type="ChEBI" id="CHEBI:43474"/>
        <dbReference type="ChEBI" id="CHEBI:137981"/>
        <dbReference type="ChEBI" id="CHEBI:147287"/>
        <dbReference type="ChEBI" id="CHEBI:456216"/>
        <dbReference type="EC" id="6.3.3.1"/>
    </reaction>
</comment>
<comment type="pathway">
    <text evidence="1">Purine metabolism; IMP biosynthesis via de novo pathway; 5-amino-1-(5-phospho-D-ribosyl)imidazole from N(2)-formyl-N(1)-(5-phospho-D-ribosyl)glycinamide: step 2/2.</text>
</comment>
<comment type="subcellular location">
    <subcellularLocation>
        <location evidence="1">Cytoplasm</location>
    </subcellularLocation>
</comment>
<comment type="similarity">
    <text evidence="1">Belongs to the AIR synthase family.</text>
</comment>
<sequence length="334" mass="36685">MLTYAQAGVDEEKTARALREIIRTARETFKLRKGKVGEPGDIGHYAALLDFGNFYLAMTTDGVGTKVLVAEAVGKFDTIGIDMIAMNVNDLLCVGAEPLALVDYFAVKEPNEEVFKQVAKGLYKGAEEAGVAIVGGETAVMPDLINGYDLAGTAIGIVEKGKVITGERIRPGDSVIGISSSGIHSNGLTLARKLLIPKYGLDYEYEGRKLWEWLLEPTRIYVRPILELINSVEVHGLAHITGGGLLNLKRLTNYGFELEMPPIEGIFKLIHENGVPLDEMFRVFNMGVGFIVVVPQEEKEEALEILSRHYKSYELGNVTRELGKIKVKNYGITL</sequence>
<feature type="chain" id="PRO_0000148285" description="Phosphoribosylformylglycinamidine cyclo-ligase">
    <location>
        <begin position="1"/>
        <end position="334"/>
    </location>
</feature>
<protein>
    <recommendedName>
        <fullName evidence="1">Phosphoribosylformylglycinamidine cyclo-ligase</fullName>
        <ecNumber evidence="1">6.3.3.1</ecNumber>
    </recommendedName>
    <alternativeName>
        <fullName evidence="1">AIR synthase</fullName>
    </alternativeName>
    <alternativeName>
        <fullName evidence="1">AIRS</fullName>
    </alternativeName>
    <alternativeName>
        <fullName evidence="1">Phosphoribosyl-aminoimidazole synthetase</fullName>
    </alternativeName>
</protein>
<accession>Q9UY56</accession>
<accession>G8ZK13</accession>